<proteinExistence type="inferred from homology"/>
<sequence>MSEHPENMTAPEWAAHIPVLLEEVLEYLAPRKGGRYLDGTLGLAGHASAVLERAGEGTELCGLDRDPEALRRATARLAPFAGQTHLYHLRYSEFEEALDDLGWPTVDGALIDIGVSSMQIDLAERGFSFHADGPLDMRMDPDAHESAWRLVNRERHEVLRDIIARYGEEPMAGRIARAIVDARNTGSIDTTLQLAAIVERAYPAKWRATARNHPATRTFQALRMAVNDELGELERFLDAILARLAPGGRLVVISFHSLEDRIVKHRMRHWAEGCRCPRHVPRCVCGHSPEVRILTKRPVTATDGELARNPRASSAKLRAAEKV</sequence>
<reference key="1">
    <citation type="journal article" date="2004" name="Nat. Biotechnol.">
        <title>The genome sequence of the anaerobic, sulfate-reducing bacterium Desulfovibrio vulgaris Hildenborough.</title>
        <authorList>
            <person name="Heidelberg J.F."/>
            <person name="Seshadri R."/>
            <person name="Haveman S.A."/>
            <person name="Hemme C.L."/>
            <person name="Paulsen I.T."/>
            <person name="Kolonay J.F."/>
            <person name="Eisen J.A."/>
            <person name="Ward N.L."/>
            <person name="Methe B.A."/>
            <person name="Brinkac L.M."/>
            <person name="Daugherty S.C."/>
            <person name="DeBoy R.T."/>
            <person name="Dodson R.J."/>
            <person name="Durkin A.S."/>
            <person name="Madupu R."/>
            <person name="Nelson W.C."/>
            <person name="Sullivan S.A."/>
            <person name="Fouts D.E."/>
            <person name="Haft D.H."/>
            <person name="Selengut J."/>
            <person name="Peterson J.D."/>
            <person name="Davidsen T.M."/>
            <person name="Zafar N."/>
            <person name="Zhou L."/>
            <person name="Radune D."/>
            <person name="Dimitrov G."/>
            <person name="Hance M."/>
            <person name="Tran K."/>
            <person name="Khouri H.M."/>
            <person name="Gill J."/>
            <person name="Utterback T.R."/>
            <person name="Feldblyum T.V."/>
            <person name="Wall J.D."/>
            <person name="Voordouw G."/>
            <person name="Fraser C.M."/>
        </authorList>
    </citation>
    <scope>NUCLEOTIDE SEQUENCE [LARGE SCALE GENOMIC DNA]</scope>
    <source>
        <strain>ATCC 29579 / DSM 644 / CCUG 34227 / NCIMB 8303 / VKM B-1760 / Hildenborough</strain>
    </source>
</reference>
<gene>
    <name evidence="1" type="primary">rsmH</name>
    <name type="synonym">mraW</name>
    <name type="ordered locus">DVU_2512</name>
</gene>
<evidence type="ECO:0000255" key="1">
    <source>
        <dbReference type="HAMAP-Rule" id="MF_01007"/>
    </source>
</evidence>
<keyword id="KW-0963">Cytoplasm</keyword>
<keyword id="KW-0489">Methyltransferase</keyword>
<keyword id="KW-1185">Reference proteome</keyword>
<keyword id="KW-0698">rRNA processing</keyword>
<keyword id="KW-0949">S-adenosyl-L-methionine</keyword>
<keyword id="KW-0808">Transferase</keyword>
<protein>
    <recommendedName>
        <fullName evidence="1">Ribosomal RNA small subunit methyltransferase H</fullName>
        <ecNumber evidence="1">2.1.1.199</ecNumber>
    </recommendedName>
    <alternativeName>
        <fullName evidence="1">16S rRNA m(4)C1402 methyltransferase</fullName>
    </alternativeName>
    <alternativeName>
        <fullName evidence="1">rRNA (cytosine-N(4)-)-methyltransferase RsmH</fullName>
    </alternativeName>
</protein>
<organism>
    <name type="scientific">Nitratidesulfovibrio vulgaris (strain ATCC 29579 / DSM 644 / CCUG 34227 / NCIMB 8303 / VKM B-1760 / Hildenborough)</name>
    <name type="common">Desulfovibrio vulgaris</name>
    <dbReference type="NCBI Taxonomy" id="882"/>
    <lineage>
        <taxon>Bacteria</taxon>
        <taxon>Pseudomonadati</taxon>
        <taxon>Thermodesulfobacteriota</taxon>
        <taxon>Desulfovibrionia</taxon>
        <taxon>Desulfovibrionales</taxon>
        <taxon>Desulfovibrionaceae</taxon>
        <taxon>Nitratidesulfovibrio</taxon>
    </lineage>
</organism>
<name>RSMH_NITV2</name>
<comment type="function">
    <text evidence="1">Specifically methylates the N4 position of cytidine in position 1402 (C1402) of 16S rRNA.</text>
</comment>
<comment type="catalytic activity">
    <reaction evidence="1">
        <text>cytidine(1402) in 16S rRNA + S-adenosyl-L-methionine = N(4)-methylcytidine(1402) in 16S rRNA + S-adenosyl-L-homocysteine + H(+)</text>
        <dbReference type="Rhea" id="RHEA:42928"/>
        <dbReference type="Rhea" id="RHEA-COMP:10286"/>
        <dbReference type="Rhea" id="RHEA-COMP:10287"/>
        <dbReference type="ChEBI" id="CHEBI:15378"/>
        <dbReference type="ChEBI" id="CHEBI:57856"/>
        <dbReference type="ChEBI" id="CHEBI:59789"/>
        <dbReference type="ChEBI" id="CHEBI:74506"/>
        <dbReference type="ChEBI" id="CHEBI:82748"/>
        <dbReference type="EC" id="2.1.1.199"/>
    </reaction>
</comment>
<comment type="subcellular location">
    <subcellularLocation>
        <location evidence="1">Cytoplasm</location>
    </subcellularLocation>
</comment>
<comment type="similarity">
    <text evidence="1">Belongs to the methyltransferase superfamily. RsmH family.</text>
</comment>
<feature type="chain" id="PRO_0000108619" description="Ribosomal RNA small subunit methyltransferase H">
    <location>
        <begin position="1"/>
        <end position="323"/>
    </location>
</feature>
<feature type="binding site" evidence="1">
    <location>
        <begin position="44"/>
        <end position="46"/>
    </location>
    <ligand>
        <name>S-adenosyl-L-methionine</name>
        <dbReference type="ChEBI" id="CHEBI:59789"/>
    </ligand>
</feature>
<feature type="binding site" evidence="1">
    <location>
        <position position="64"/>
    </location>
    <ligand>
        <name>S-adenosyl-L-methionine</name>
        <dbReference type="ChEBI" id="CHEBI:59789"/>
    </ligand>
</feature>
<feature type="binding site" evidence="1">
    <location>
        <position position="91"/>
    </location>
    <ligand>
        <name>S-adenosyl-L-methionine</name>
        <dbReference type="ChEBI" id="CHEBI:59789"/>
    </ligand>
</feature>
<feature type="binding site" evidence="1">
    <location>
        <position position="112"/>
    </location>
    <ligand>
        <name>S-adenosyl-L-methionine</name>
        <dbReference type="ChEBI" id="CHEBI:59789"/>
    </ligand>
</feature>
<feature type="binding site" evidence="1">
    <location>
        <position position="119"/>
    </location>
    <ligand>
        <name>S-adenosyl-L-methionine</name>
        <dbReference type="ChEBI" id="CHEBI:59789"/>
    </ligand>
</feature>
<dbReference type="EC" id="2.1.1.199" evidence="1"/>
<dbReference type="EMBL" id="AE017285">
    <property type="protein sequence ID" value="AAS96984.1"/>
    <property type="molecule type" value="Genomic_DNA"/>
</dbReference>
<dbReference type="RefSeq" id="WP_010939782.1">
    <property type="nucleotide sequence ID" value="NC_002937.3"/>
</dbReference>
<dbReference type="RefSeq" id="YP_011724.1">
    <property type="nucleotide sequence ID" value="NC_002937.3"/>
</dbReference>
<dbReference type="SMR" id="P62470"/>
<dbReference type="STRING" id="882.DVU_2512"/>
<dbReference type="PaxDb" id="882-DVU_2512"/>
<dbReference type="EnsemblBacteria" id="AAS96984">
    <property type="protein sequence ID" value="AAS96984"/>
    <property type="gene ID" value="DVU_2512"/>
</dbReference>
<dbReference type="KEGG" id="dvu:DVU_2512"/>
<dbReference type="PATRIC" id="fig|882.5.peg.2272"/>
<dbReference type="eggNOG" id="COG0275">
    <property type="taxonomic scope" value="Bacteria"/>
</dbReference>
<dbReference type="HOGENOM" id="CLU_038422_2_0_7"/>
<dbReference type="OrthoDB" id="9806637at2"/>
<dbReference type="PhylomeDB" id="P62470"/>
<dbReference type="Proteomes" id="UP000002194">
    <property type="component" value="Chromosome"/>
</dbReference>
<dbReference type="GO" id="GO:0005737">
    <property type="term" value="C:cytoplasm"/>
    <property type="evidence" value="ECO:0007669"/>
    <property type="project" value="UniProtKB-SubCell"/>
</dbReference>
<dbReference type="GO" id="GO:0071424">
    <property type="term" value="F:rRNA (cytosine-N4-)-methyltransferase activity"/>
    <property type="evidence" value="ECO:0007669"/>
    <property type="project" value="UniProtKB-UniRule"/>
</dbReference>
<dbReference type="GO" id="GO:0070475">
    <property type="term" value="P:rRNA base methylation"/>
    <property type="evidence" value="ECO:0007669"/>
    <property type="project" value="UniProtKB-UniRule"/>
</dbReference>
<dbReference type="Gene3D" id="1.10.150.170">
    <property type="entry name" value="Putative methyltransferase TM0872, insert domain"/>
    <property type="match status" value="1"/>
</dbReference>
<dbReference type="Gene3D" id="3.40.50.150">
    <property type="entry name" value="Vaccinia Virus protein VP39"/>
    <property type="match status" value="1"/>
</dbReference>
<dbReference type="HAMAP" id="MF_01007">
    <property type="entry name" value="16SrRNA_methyltr_H"/>
    <property type="match status" value="1"/>
</dbReference>
<dbReference type="InterPro" id="IPR002903">
    <property type="entry name" value="RsmH"/>
</dbReference>
<dbReference type="InterPro" id="IPR023397">
    <property type="entry name" value="SAM-dep_MeTrfase_MraW_recog"/>
</dbReference>
<dbReference type="InterPro" id="IPR029063">
    <property type="entry name" value="SAM-dependent_MTases_sf"/>
</dbReference>
<dbReference type="NCBIfam" id="TIGR00006">
    <property type="entry name" value="16S rRNA (cytosine(1402)-N(4))-methyltransferase RsmH"/>
    <property type="match status" value="1"/>
</dbReference>
<dbReference type="PANTHER" id="PTHR11265:SF0">
    <property type="entry name" value="12S RRNA N4-METHYLCYTIDINE METHYLTRANSFERASE"/>
    <property type="match status" value="1"/>
</dbReference>
<dbReference type="PANTHER" id="PTHR11265">
    <property type="entry name" value="S-ADENOSYL-METHYLTRANSFERASE MRAW"/>
    <property type="match status" value="1"/>
</dbReference>
<dbReference type="Pfam" id="PF01795">
    <property type="entry name" value="Methyltransf_5"/>
    <property type="match status" value="1"/>
</dbReference>
<dbReference type="PIRSF" id="PIRSF004486">
    <property type="entry name" value="MraW"/>
    <property type="match status" value="1"/>
</dbReference>
<dbReference type="SUPFAM" id="SSF81799">
    <property type="entry name" value="Putative methyltransferase TM0872, insert domain"/>
    <property type="match status" value="1"/>
</dbReference>
<dbReference type="SUPFAM" id="SSF53335">
    <property type="entry name" value="S-adenosyl-L-methionine-dependent methyltransferases"/>
    <property type="match status" value="1"/>
</dbReference>
<accession>P62470</accession>